<accession>Q4I2D7</accession>
<accession>A0A098DGC9</accession>
<accession>A0A0E0S0I1</accession>
<accession>A0A1C3YM81</accession>
<accession>V6RJG5</accession>
<reference key="1">
    <citation type="journal article" date="2007" name="Science">
        <title>The Fusarium graminearum genome reveals a link between localized polymorphism and pathogen specialization.</title>
        <authorList>
            <person name="Cuomo C.A."/>
            <person name="Gueldener U."/>
            <person name="Xu J.-R."/>
            <person name="Trail F."/>
            <person name="Turgeon B.G."/>
            <person name="Di Pietro A."/>
            <person name="Walton J.D."/>
            <person name="Ma L.-J."/>
            <person name="Baker S.E."/>
            <person name="Rep M."/>
            <person name="Adam G."/>
            <person name="Antoniw J."/>
            <person name="Baldwin T."/>
            <person name="Calvo S.E."/>
            <person name="Chang Y.-L."/>
            <person name="DeCaprio D."/>
            <person name="Gale L.R."/>
            <person name="Gnerre S."/>
            <person name="Goswami R.S."/>
            <person name="Hammond-Kosack K."/>
            <person name="Harris L.J."/>
            <person name="Hilburn K."/>
            <person name="Kennell J.C."/>
            <person name="Kroken S."/>
            <person name="Magnuson J.K."/>
            <person name="Mannhaupt G."/>
            <person name="Mauceli E.W."/>
            <person name="Mewes H.-W."/>
            <person name="Mitterbauer R."/>
            <person name="Muehlbauer G."/>
            <person name="Muensterkoetter M."/>
            <person name="Nelson D."/>
            <person name="O'Donnell K."/>
            <person name="Ouellet T."/>
            <person name="Qi W."/>
            <person name="Quesneville H."/>
            <person name="Roncero M.I.G."/>
            <person name="Seong K.-Y."/>
            <person name="Tetko I.V."/>
            <person name="Urban M."/>
            <person name="Waalwijk C."/>
            <person name="Ward T.J."/>
            <person name="Yao J."/>
            <person name="Birren B.W."/>
            <person name="Kistler H.C."/>
        </authorList>
    </citation>
    <scope>NUCLEOTIDE SEQUENCE [LARGE SCALE GENOMIC DNA]</scope>
    <source>
        <strain>ATCC MYA-4620 / CBS 123657 / FGSC 9075 / NRRL 31084 / PH-1</strain>
    </source>
</reference>
<reference key="2">
    <citation type="journal article" date="2010" name="Nature">
        <title>Comparative genomics reveals mobile pathogenicity chromosomes in Fusarium.</title>
        <authorList>
            <person name="Ma L.-J."/>
            <person name="van der Does H.C."/>
            <person name="Borkovich K.A."/>
            <person name="Coleman J.J."/>
            <person name="Daboussi M.-J."/>
            <person name="Di Pietro A."/>
            <person name="Dufresne M."/>
            <person name="Freitag M."/>
            <person name="Grabherr M."/>
            <person name="Henrissat B."/>
            <person name="Houterman P.M."/>
            <person name="Kang S."/>
            <person name="Shim W.-B."/>
            <person name="Woloshuk C."/>
            <person name="Xie X."/>
            <person name="Xu J.-R."/>
            <person name="Antoniw J."/>
            <person name="Baker S.E."/>
            <person name="Bluhm B.H."/>
            <person name="Breakspear A."/>
            <person name="Brown D.W."/>
            <person name="Butchko R.A.E."/>
            <person name="Chapman S."/>
            <person name="Coulson R."/>
            <person name="Coutinho P.M."/>
            <person name="Danchin E.G.J."/>
            <person name="Diener A."/>
            <person name="Gale L.R."/>
            <person name="Gardiner D.M."/>
            <person name="Goff S."/>
            <person name="Hammond-Kosack K.E."/>
            <person name="Hilburn K."/>
            <person name="Hua-Van A."/>
            <person name="Jonkers W."/>
            <person name="Kazan K."/>
            <person name="Kodira C.D."/>
            <person name="Koehrsen M."/>
            <person name="Kumar L."/>
            <person name="Lee Y.-H."/>
            <person name="Li L."/>
            <person name="Manners J.M."/>
            <person name="Miranda-Saavedra D."/>
            <person name="Mukherjee M."/>
            <person name="Park G."/>
            <person name="Park J."/>
            <person name="Park S.-Y."/>
            <person name="Proctor R.H."/>
            <person name="Regev A."/>
            <person name="Ruiz-Roldan M.C."/>
            <person name="Sain D."/>
            <person name="Sakthikumar S."/>
            <person name="Sykes S."/>
            <person name="Schwartz D.C."/>
            <person name="Turgeon B.G."/>
            <person name="Wapinski I."/>
            <person name="Yoder O."/>
            <person name="Young S."/>
            <person name="Zeng Q."/>
            <person name="Zhou S."/>
            <person name="Galagan J."/>
            <person name="Cuomo C.A."/>
            <person name="Kistler H.C."/>
            <person name="Rep M."/>
        </authorList>
    </citation>
    <scope>GENOME REANNOTATION</scope>
    <source>
        <strain>ATCC MYA-4620 / CBS 123657 / FGSC 9075 / NRRL 31084 / PH-1</strain>
    </source>
</reference>
<reference key="3">
    <citation type="journal article" date="2015" name="BMC Genomics">
        <title>The completed genome sequence of the pathogenic ascomycete fungus Fusarium graminearum.</title>
        <authorList>
            <person name="King R."/>
            <person name="Urban M."/>
            <person name="Hammond-Kosack M.C.U."/>
            <person name="Hassani-Pak K."/>
            <person name="Hammond-Kosack K.E."/>
        </authorList>
    </citation>
    <scope>NUCLEOTIDE SEQUENCE [LARGE SCALE GENOMIC DNA]</scope>
    <source>
        <strain>ATCC MYA-4620 / CBS 123657 / FGSC 9075 / NRRL 31084 / PH-1</strain>
    </source>
</reference>
<evidence type="ECO:0000250" key="1"/>
<evidence type="ECO:0000305" key="2"/>
<protein>
    <recommendedName>
        <fullName>F-actin-capping protein subunit alpha</fullName>
    </recommendedName>
</protein>
<organism>
    <name type="scientific">Gibberella zeae (strain ATCC MYA-4620 / CBS 123657 / FGSC 9075 / NRRL 31084 / PH-1)</name>
    <name type="common">Wheat head blight fungus</name>
    <name type="synonym">Fusarium graminearum</name>
    <dbReference type="NCBI Taxonomy" id="229533"/>
    <lineage>
        <taxon>Eukaryota</taxon>
        <taxon>Fungi</taxon>
        <taxon>Dikarya</taxon>
        <taxon>Ascomycota</taxon>
        <taxon>Pezizomycotina</taxon>
        <taxon>Sordariomycetes</taxon>
        <taxon>Hypocreomycetidae</taxon>
        <taxon>Hypocreales</taxon>
        <taxon>Nectriaceae</taxon>
        <taxon>Fusarium</taxon>
    </lineage>
</organism>
<proteinExistence type="inferred from homology"/>
<gene>
    <name type="primary">CAP1</name>
    <name type="ORF">FGRAMPH1_01T10407</name>
    <name type="ORF">FGRRES_08621_M</name>
    <name type="ORF">FGSG_08621</name>
</gene>
<keyword id="KW-0117">Actin capping</keyword>
<keyword id="KW-0009">Actin-binding</keyword>
<keyword id="KW-0963">Cytoplasm</keyword>
<keyword id="KW-0206">Cytoskeleton</keyword>
<keyword id="KW-1185">Reference proteome</keyword>
<sequence length="273" mass="29917">MSDIETVSSFVEGAPPGELADVIADIKSLTLETNPDIVNSLTPAFEKYNEEQFVTVKLPGSSQPVIISSYNSLGDGRYFDVESSSSFTFDHTTQKASAVQSHVLEGAQADLVKSTLKSIGPYVDEHFANAAHGVYPIESDSKIAIVIVGNKYSPNNFWNGRWRSLYILDPSSGALEGSLKVDVHYYEDGNVRLLTNKPVSSTISSANGAGIVREISAMEKRYQEELNKGFVSLSEGAFKGLRRQLPVTRQKIEWDRVTSYRLGQDIGNGGSRR</sequence>
<comment type="function">
    <text evidence="1">F-actin-capping proteins bind in a Ca(2+)-independent manner to the fast growing ends of actin filaments (barbed end) thereby blocking the exchange of subunits at these ends. Unlike other capping proteins (such as gelsolin and severin), these proteins do not sever actin filaments (By similarity).</text>
</comment>
<comment type="subunit">
    <text evidence="1">Heterodimer of an alpha and a beta subunit.</text>
</comment>
<comment type="subcellular location">
    <subcellularLocation>
        <location evidence="1">Cytoplasm</location>
        <location evidence="1">Cytoskeleton</location>
    </subcellularLocation>
    <text evidence="1">Septum.</text>
</comment>
<comment type="similarity">
    <text evidence="2">Belongs to the F-actin-capping protein alpha subunit family.</text>
</comment>
<feature type="chain" id="PRO_0000255619" description="F-actin-capping protein subunit alpha">
    <location>
        <begin position="1"/>
        <end position="273"/>
    </location>
</feature>
<name>CAPZA_GIBZE</name>
<dbReference type="EMBL" id="DS231667">
    <property type="protein sequence ID" value="ESU14698.1"/>
    <property type="molecule type" value="Genomic_DNA"/>
</dbReference>
<dbReference type="EMBL" id="HG970333">
    <property type="protein sequence ID" value="SCB65635.1"/>
    <property type="molecule type" value="Genomic_DNA"/>
</dbReference>
<dbReference type="RefSeq" id="XP_011320123.1">
    <property type="nucleotide sequence ID" value="XM_011321821.1"/>
</dbReference>
<dbReference type="SMR" id="Q4I2D7"/>
<dbReference type="FunCoup" id="Q4I2D7">
    <property type="interactions" value="808"/>
</dbReference>
<dbReference type="STRING" id="229533.Q4I2D7"/>
<dbReference type="GeneID" id="23555617"/>
<dbReference type="KEGG" id="fgr:FGSG_08621"/>
<dbReference type="VEuPathDB" id="FungiDB:FGRAMPH1_01G10407"/>
<dbReference type="eggNOG" id="KOG0836">
    <property type="taxonomic scope" value="Eukaryota"/>
</dbReference>
<dbReference type="HOGENOM" id="CLU_045161_0_0_1"/>
<dbReference type="InParanoid" id="Q4I2D7"/>
<dbReference type="OrthoDB" id="19299at110618"/>
<dbReference type="PHI-base" id="PHI:11499"/>
<dbReference type="Proteomes" id="UP000070720">
    <property type="component" value="Chromosome 2"/>
</dbReference>
<dbReference type="GO" id="GO:0030479">
    <property type="term" value="C:actin cortical patch"/>
    <property type="evidence" value="ECO:0007669"/>
    <property type="project" value="TreeGrafter"/>
</dbReference>
<dbReference type="GO" id="GO:0008290">
    <property type="term" value="C:F-actin capping protein complex"/>
    <property type="evidence" value="ECO:0007669"/>
    <property type="project" value="InterPro"/>
</dbReference>
<dbReference type="GO" id="GO:0051015">
    <property type="term" value="F:actin filament binding"/>
    <property type="evidence" value="ECO:0007669"/>
    <property type="project" value="TreeGrafter"/>
</dbReference>
<dbReference type="GO" id="GO:0030036">
    <property type="term" value="P:actin cytoskeleton organization"/>
    <property type="evidence" value="ECO:0007669"/>
    <property type="project" value="TreeGrafter"/>
</dbReference>
<dbReference type="GO" id="GO:0051016">
    <property type="term" value="P:barbed-end actin filament capping"/>
    <property type="evidence" value="ECO:0007669"/>
    <property type="project" value="InterPro"/>
</dbReference>
<dbReference type="FunFam" id="3.30.1140.60:FF:000004">
    <property type="entry name" value="F-actin-capping protein subunit alpha"/>
    <property type="match status" value="1"/>
</dbReference>
<dbReference type="FunFam" id="3.90.1150.210:FF:000003">
    <property type="entry name" value="F-actin-capping protein subunit alpha"/>
    <property type="match status" value="1"/>
</dbReference>
<dbReference type="Gene3D" id="3.30.1140.60">
    <property type="entry name" value="F-actin capping protein, alpha subunit"/>
    <property type="match status" value="1"/>
</dbReference>
<dbReference type="Gene3D" id="3.90.1150.210">
    <property type="entry name" value="F-actin capping protein, beta subunit"/>
    <property type="match status" value="1"/>
</dbReference>
<dbReference type="InterPro" id="IPR002189">
    <property type="entry name" value="CapZ_alpha"/>
</dbReference>
<dbReference type="InterPro" id="IPR037282">
    <property type="entry name" value="CapZ_alpha/beta"/>
</dbReference>
<dbReference type="InterPro" id="IPR042276">
    <property type="entry name" value="CapZ_alpha/beta_2"/>
</dbReference>
<dbReference type="InterPro" id="IPR042489">
    <property type="entry name" value="CapZ_alpha_1"/>
</dbReference>
<dbReference type="InterPro" id="IPR017865">
    <property type="entry name" value="F-actin_cap_asu_CS"/>
</dbReference>
<dbReference type="PANTHER" id="PTHR10653">
    <property type="entry name" value="F-ACTIN-CAPPING PROTEIN SUBUNIT ALPHA"/>
    <property type="match status" value="1"/>
</dbReference>
<dbReference type="PANTHER" id="PTHR10653:SF0">
    <property type="entry name" value="F-ACTIN-CAPPING PROTEIN SUBUNIT ALPHA"/>
    <property type="match status" value="1"/>
</dbReference>
<dbReference type="Pfam" id="PF01267">
    <property type="entry name" value="F-actin_cap_A"/>
    <property type="match status" value="1"/>
</dbReference>
<dbReference type="PRINTS" id="PR00191">
    <property type="entry name" value="FACTINCAPA"/>
</dbReference>
<dbReference type="SUPFAM" id="SSF90096">
    <property type="entry name" value="Subunits of heterodimeric actin filament capping protein Capz"/>
    <property type="match status" value="1"/>
</dbReference>
<dbReference type="PROSITE" id="PS00748">
    <property type="entry name" value="F_ACTIN_CAPPING_A_1"/>
    <property type="match status" value="1"/>
</dbReference>
<dbReference type="PROSITE" id="PS00749">
    <property type="entry name" value="F_ACTIN_CAPPING_A_2"/>
    <property type="match status" value="1"/>
</dbReference>